<name>NUOCD_BLOFL</name>
<proteinExistence type="inferred from homology"/>
<organism>
    <name type="scientific">Blochmanniella floridana</name>
    <dbReference type="NCBI Taxonomy" id="203907"/>
    <lineage>
        <taxon>Bacteria</taxon>
        <taxon>Pseudomonadati</taxon>
        <taxon>Pseudomonadota</taxon>
        <taxon>Gammaproteobacteria</taxon>
        <taxon>Enterobacterales</taxon>
        <taxon>Enterobacteriaceae</taxon>
        <taxon>ant endosymbionts</taxon>
        <taxon>Candidatus Blochmanniella</taxon>
    </lineage>
</organism>
<reference key="1">
    <citation type="journal article" date="2003" name="Proc. Natl. Acad. Sci. U.S.A.">
        <title>The genome sequence of Blochmannia floridanus: comparative analysis of reduced genomes.</title>
        <authorList>
            <person name="Gil R."/>
            <person name="Silva F.J."/>
            <person name="Zientz E."/>
            <person name="Delmotte F."/>
            <person name="Gonzalez-Candelas F."/>
            <person name="Latorre A."/>
            <person name="Rausell C."/>
            <person name="Kamerbeek J."/>
            <person name="Gadau J."/>
            <person name="Hoelldobler B."/>
            <person name="van Ham R.C.H.J."/>
            <person name="Gross R."/>
            <person name="Moya A."/>
        </authorList>
    </citation>
    <scope>NUCLEOTIDE SEQUENCE [LARGE SCALE GENOMIC DNA]</scope>
</reference>
<dbReference type="EC" id="7.1.1.-" evidence="1"/>
<dbReference type="EMBL" id="BX248583">
    <property type="protein sequence ID" value="CAD83180.1"/>
    <property type="molecule type" value="Genomic_DNA"/>
</dbReference>
<dbReference type="SMR" id="Q7VRV4"/>
<dbReference type="STRING" id="203907.Bfl491"/>
<dbReference type="KEGG" id="bfl:Bfl491"/>
<dbReference type="eggNOG" id="COG0649">
    <property type="taxonomic scope" value="Bacteria"/>
</dbReference>
<dbReference type="eggNOG" id="COG0852">
    <property type="taxonomic scope" value="Bacteria"/>
</dbReference>
<dbReference type="HOGENOM" id="CLU_015134_3_2_6"/>
<dbReference type="OrthoDB" id="9801496at2"/>
<dbReference type="Proteomes" id="UP000002192">
    <property type="component" value="Chromosome"/>
</dbReference>
<dbReference type="GO" id="GO:0030964">
    <property type="term" value="C:NADH dehydrogenase complex"/>
    <property type="evidence" value="ECO:0007669"/>
    <property type="project" value="InterPro"/>
</dbReference>
<dbReference type="GO" id="GO:0005886">
    <property type="term" value="C:plasma membrane"/>
    <property type="evidence" value="ECO:0007669"/>
    <property type="project" value="UniProtKB-SubCell"/>
</dbReference>
<dbReference type="GO" id="GO:0051287">
    <property type="term" value="F:NAD binding"/>
    <property type="evidence" value="ECO:0007669"/>
    <property type="project" value="InterPro"/>
</dbReference>
<dbReference type="GO" id="GO:0008137">
    <property type="term" value="F:NADH dehydrogenase (ubiquinone) activity"/>
    <property type="evidence" value="ECO:0007669"/>
    <property type="project" value="InterPro"/>
</dbReference>
<dbReference type="GO" id="GO:0050136">
    <property type="term" value="F:NADH:ubiquinone reductase (non-electrogenic) activity"/>
    <property type="evidence" value="ECO:0007669"/>
    <property type="project" value="UniProtKB-UniRule"/>
</dbReference>
<dbReference type="GO" id="GO:0048038">
    <property type="term" value="F:quinone binding"/>
    <property type="evidence" value="ECO:0007669"/>
    <property type="project" value="UniProtKB-KW"/>
</dbReference>
<dbReference type="FunFam" id="1.10.645.10:FF:000001">
    <property type="entry name" value="NADH-quinone oxidoreductase subunit C/D"/>
    <property type="match status" value="1"/>
</dbReference>
<dbReference type="Gene3D" id="1.10.645.10">
    <property type="entry name" value="Cytochrome-c3 Hydrogenase, chain B"/>
    <property type="match status" value="1"/>
</dbReference>
<dbReference type="Gene3D" id="3.30.460.80">
    <property type="entry name" value="NADH:ubiquinone oxidoreductase, 30kDa subunit"/>
    <property type="match status" value="1"/>
</dbReference>
<dbReference type="HAMAP" id="MF_01359">
    <property type="entry name" value="NDH1_NuoCD_1"/>
    <property type="match status" value="1"/>
</dbReference>
<dbReference type="HAMAP" id="MF_01358">
    <property type="entry name" value="NDH1_NuoD"/>
    <property type="match status" value="1"/>
</dbReference>
<dbReference type="InterPro" id="IPR010218">
    <property type="entry name" value="NADH_DH_suC"/>
</dbReference>
<dbReference type="InterPro" id="IPR023062">
    <property type="entry name" value="NADH_DH_suCD"/>
</dbReference>
<dbReference type="InterPro" id="IPR001135">
    <property type="entry name" value="NADH_Q_OxRdtase_suD"/>
</dbReference>
<dbReference type="InterPro" id="IPR037232">
    <property type="entry name" value="NADH_quin_OxRdtase_su_C/D-like"/>
</dbReference>
<dbReference type="InterPro" id="IPR001268">
    <property type="entry name" value="NADH_UbQ_OxRdtase_30kDa_su"/>
</dbReference>
<dbReference type="InterPro" id="IPR014029">
    <property type="entry name" value="NADH_UbQ_OxRdtase_49kDa_CS"/>
</dbReference>
<dbReference type="InterPro" id="IPR022885">
    <property type="entry name" value="NDH1_su_D/H"/>
</dbReference>
<dbReference type="InterPro" id="IPR029014">
    <property type="entry name" value="NiFe-Hase_large"/>
</dbReference>
<dbReference type="NCBIfam" id="TIGR01961">
    <property type="entry name" value="NuoC_fam"/>
    <property type="match status" value="1"/>
</dbReference>
<dbReference type="NCBIfam" id="TIGR01962">
    <property type="entry name" value="NuoD"/>
    <property type="match status" value="1"/>
</dbReference>
<dbReference type="NCBIfam" id="NF004739">
    <property type="entry name" value="PRK06075.1"/>
    <property type="match status" value="1"/>
</dbReference>
<dbReference type="NCBIfam" id="NF008728">
    <property type="entry name" value="PRK11742.1"/>
    <property type="match status" value="1"/>
</dbReference>
<dbReference type="PANTHER" id="PTHR11993:SF45">
    <property type="entry name" value="NADH-QUINONE OXIDOREDUCTASE SUBUNIT C_D"/>
    <property type="match status" value="1"/>
</dbReference>
<dbReference type="PANTHER" id="PTHR11993">
    <property type="entry name" value="NADH-UBIQUINONE OXIDOREDUCTASE 49 KDA SUBUNIT"/>
    <property type="match status" value="1"/>
</dbReference>
<dbReference type="Pfam" id="PF00329">
    <property type="entry name" value="Complex1_30kDa"/>
    <property type="match status" value="1"/>
</dbReference>
<dbReference type="Pfam" id="PF00346">
    <property type="entry name" value="Complex1_49kDa"/>
    <property type="match status" value="1"/>
</dbReference>
<dbReference type="SUPFAM" id="SSF56762">
    <property type="entry name" value="HydB/Nqo4-like"/>
    <property type="match status" value="1"/>
</dbReference>
<dbReference type="SUPFAM" id="SSF143243">
    <property type="entry name" value="Nqo5-like"/>
    <property type="match status" value="1"/>
</dbReference>
<dbReference type="PROSITE" id="PS00535">
    <property type="entry name" value="COMPLEX1_49K"/>
    <property type="match status" value="1"/>
</dbReference>
<comment type="function">
    <text evidence="1">NDH-1 shuttles electrons from NADH, via FMN and iron-sulfur (Fe-S) centers, to quinones in the respiratory chain. The immediate electron acceptor for the enzyme in this species is believed to be ubiquinone. Couples the redox reaction to proton translocation (for every two electrons transferred, four hydrogen ions are translocated across the cytoplasmic membrane), and thus conserves the redox energy in a proton gradient.</text>
</comment>
<comment type="catalytic activity">
    <reaction evidence="1">
        <text>a quinone + NADH + 5 H(+)(in) = a quinol + NAD(+) + 4 H(+)(out)</text>
        <dbReference type="Rhea" id="RHEA:57888"/>
        <dbReference type="ChEBI" id="CHEBI:15378"/>
        <dbReference type="ChEBI" id="CHEBI:24646"/>
        <dbReference type="ChEBI" id="CHEBI:57540"/>
        <dbReference type="ChEBI" id="CHEBI:57945"/>
        <dbReference type="ChEBI" id="CHEBI:132124"/>
    </reaction>
</comment>
<comment type="subunit">
    <text evidence="1">NDH-1 is composed of 13 different subunits. Subunits NuoB, CD, E, F, and G constitute the peripheral sector of the complex.</text>
</comment>
<comment type="subcellular location">
    <subcellularLocation>
        <location evidence="1">Cell inner membrane</location>
        <topology evidence="1">Peripheral membrane protein</topology>
        <orientation evidence="1">Cytoplasmic side</orientation>
    </subcellularLocation>
</comment>
<comment type="similarity">
    <text evidence="1">In the N-terminal section; belongs to the complex I 30 kDa subunit family.</text>
</comment>
<comment type="similarity">
    <text evidence="1">In the C-terminal section; belongs to the complex I 49 kDa subunit family.</text>
</comment>
<feature type="chain" id="PRO_0000358622" description="NADH-quinone oxidoreductase subunit C/D">
    <location>
        <begin position="1"/>
        <end position="596"/>
    </location>
</feature>
<feature type="region of interest" description="NADH dehydrogenase I subunit C" evidence="1">
    <location>
        <begin position="1"/>
        <end position="186"/>
    </location>
</feature>
<feature type="region of interest" description="NADH dehydrogenase I subunit D" evidence="1">
    <location>
        <begin position="210"/>
        <end position="596"/>
    </location>
</feature>
<protein>
    <recommendedName>
        <fullName evidence="1">NADH-quinone oxidoreductase subunit C/D</fullName>
        <ecNumber evidence="1">7.1.1.-</ecNumber>
    </recommendedName>
    <alternativeName>
        <fullName evidence="1">NADH dehydrogenase I subunit C/D</fullName>
    </alternativeName>
    <alternativeName>
        <fullName evidence="1">NDH-1 subunit C/D</fullName>
    </alternativeName>
</protein>
<keyword id="KW-0997">Cell inner membrane</keyword>
<keyword id="KW-1003">Cell membrane</keyword>
<keyword id="KW-0472">Membrane</keyword>
<keyword id="KW-0511">Multifunctional enzyme</keyword>
<keyword id="KW-0520">NAD</keyword>
<keyword id="KW-0874">Quinone</keyword>
<keyword id="KW-1185">Reference proteome</keyword>
<keyword id="KW-1278">Translocase</keyword>
<keyword id="KW-0813">Transport</keyword>
<keyword id="KW-0830">Ubiquinone</keyword>
<gene>
    <name evidence="1" type="primary">nuoC</name>
    <name evidence="1" type="synonym">nuoCD</name>
    <name evidence="1" type="synonym">nuoD</name>
    <name type="ordered locus">Bfl491</name>
</gene>
<accession>Q7VRV4</accession>
<evidence type="ECO:0000255" key="1">
    <source>
        <dbReference type="HAMAP-Rule" id="MF_01359"/>
    </source>
</evidence>
<sequence length="596" mass="69069">MMNDNKYIHIDSCVIEKHKIWDSLITKFGSHDLILQSAYIDSLIIWIPKERIIPIMEFLKQILAPHVMLYDLHGIDERLRMYRKELPEADFTVFYHIMSMSRNYDVILKVPLLENAMNVTTITSVFMNANWYERETWEMFGIHFDYHPNLTRIIMPKCWKGFPLRKEYPARATEFYPAFTLTRKKEDLAMDDLLFKPEEWGMHRNNKHEDFMFLNLGPNHPSVHGVFRIILQLSGEEIIDCVPDIGYHHRGAEKMGERQSWHSYIPYTDRVEYLGGCINEMPYVLAVEKLAGIVVPDRAKIIRIMLSELFRINSHLLYVSTYLQDVGVMTPVFLAFTDRQKIYDVIESITGARMHPAWFRIGGVADDLPLNWSDLLKQCLDWLPKRIAFYIDIALKNSIFKKRTCGIGSYGAKEALSWGVTGSGLRATGIEFDLRKSRPYSGYENFDFDIPIGNGLSDCYNRLVLKIEEMYQSIRILNQCLKNMPTGPVKSDHPLTTPPMKKYALKHIETLITHFLQVSWGPVIPPNESLQMVEATKGINSYYLISDGNTMSYRTRIRTPSFPHLQQIPSVIRGSLIPDLIAYLGSIDFVMSDVDR</sequence>